<reference key="1">
    <citation type="submission" date="2006-03" db="EMBL/GenBank/DDBJ databases">
        <title>Complete sequence of Rhodopseudomonas palustris BisB18.</title>
        <authorList>
            <consortium name="US DOE Joint Genome Institute"/>
            <person name="Copeland A."/>
            <person name="Lucas S."/>
            <person name="Lapidus A."/>
            <person name="Barry K."/>
            <person name="Detter J.C."/>
            <person name="Glavina del Rio T."/>
            <person name="Hammon N."/>
            <person name="Israni S."/>
            <person name="Dalin E."/>
            <person name="Tice H."/>
            <person name="Pitluck S."/>
            <person name="Chain P."/>
            <person name="Malfatti S."/>
            <person name="Shin M."/>
            <person name="Vergez L."/>
            <person name="Schmutz J."/>
            <person name="Larimer F."/>
            <person name="Land M."/>
            <person name="Hauser L."/>
            <person name="Pelletier D.A."/>
            <person name="Kyrpides N."/>
            <person name="Anderson I."/>
            <person name="Oda Y."/>
            <person name="Harwood C.S."/>
            <person name="Richardson P."/>
        </authorList>
    </citation>
    <scope>NUCLEOTIDE SEQUENCE [LARGE SCALE GENOMIC DNA]</scope>
    <source>
        <strain>BisB18</strain>
    </source>
</reference>
<keyword id="KW-0067">ATP-binding</keyword>
<keyword id="KW-0315">Glutamine amidotransferase</keyword>
<keyword id="KW-0436">Ligase</keyword>
<keyword id="KW-0460">Magnesium</keyword>
<keyword id="KW-0479">Metal-binding</keyword>
<keyword id="KW-0547">Nucleotide-binding</keyword>
<keyword id="KW-0665">Pyrimidine biosynthesis</keyword>
<protein>
    <recommendedName>
        <fullName evidence="1">CTP synthase</fullName>
        <ecNumber evidence="1">6.3.4.2</ecNumber>
    </recommendedName>
    <alternativeName>
        <fullName evidence="1">Cytidine 5'-triphosphate synthase</fullName>
    </alternativeName>
    <alternativeName>
        <fullName evidence="1">Cytidine triphosphate synthetase</fullName>
        <shortName evidence="1">CTP synthetase</shortName>
        <shortName evidence="1">CTPS</shortName>
    </alternativeName>
    <alternativeName>
        <fullName evidence="1">UTP--ammonia ligase</fullName>
    </alternativeName>
</protein>
<accession>Q215B2</accession>
<gene>
    <name evidence="1" type="primary">pyrG</name>
    <name type="ordered locus">RPC_2473</name>
</gene>
<proteinExistence type="inferred from homology"/>
<organism>
    <name type="scientific">Rhodopseudomonas palustris (strain BisB18)</name>
    <dbReference type="NCBI Taxonomy" id="316056"/>
    <lineage>
        <taxon>Bacteria</taxon>
        <taxon>Pseudomonadati</taxon>
        <taxon>Pseudomonadota</taxon>
        <taxon>Alphaproteobacteria</taxon>
        <taxon>Hyphomicrobiales</taxon>
        <taxon>Nitrobacteraceae</taxon>
        <taxon>Rhodopseudomonas</taxon>
    </lineage>
</organism>
<sequence length="543" mass="60129">MARYIFITGGVVSSLGKGLASAALGALLQSRGYKVRLRKLDPYLNLDPGTMSPYQHGEVFVTDDGAETDLDLGHYERFTGRPATKADNITTGRIYQDILTKERRGDYLGATIQVIPHVTNAIKEFILDSNDAYDFVLCEIGGTVGDIEGLPFFEAIRQIKNDLPRGEAIYVHLTLLPYIPSAGELKTKPTQHSVKELRSIGIQPDILLCRTDREIPKEERRKLGLFCNVRESAVIEARDVDNIYAVPEAYHAAGLDDEVLAAFGIAPKAEPDMISWNVINERIRNPEGQVTIAIVGKYTGMKDAYKSLSEALSHGGIANKVKVNLDWIESEVFENEDPAPFLEHVNGILVPGGFGQRGAEGKIRAAQFARERNVPYFGICFGMQMAVIEAARNLAGIAAANSTEFGPTKEPLVGLMTEWLRGNEREQRSHAGDLGGTMRLGAYPAMLQRGSRVSEVYGGALEISERHRHRYEVNTAYKDRLEQHGLRFSGLSPDGVLPEIVEYEDHPWFIGVQFHPELKSRPFEPHPLFASFVQAAVVQSRLV</sequence>
<dbReference type="EC" id="6.3.4.2" evidence="1"/>
<dbReference type="EMBL" id="CP000301">
    <property type="protein sequence ID" value="ABD88024.1"/>
    <property type="molecule type" value="Genomic_DNA"/>
</dbReference>
<dbReference type="SMR" id="Q215B2"/>
<dbReference type="STRING" id="316056.RPC_2473"/>
<dbReference type="MEROPS" id="C26.964"/>
<dbReference type="KEGG" id="rpc:RPC_2473"/>
<dbReference type="eggNOG" id="COG0504">
    <property type="taxonomic scope" value="Bacteria"/>
</dbReference>
<dbReference type="HOGENOM" id="CLU_011675_5_0_5"/>
<dbReference type="OrthoDB" id="9801107at2"/>
<dbReference type="UniPathway" id="UPA00159">
    <property type="reaction ID" value="UER00277"/>
</dbReference>
<dbReference type="GO" id="GO:0005829">
    <property type="term" value="C:cytosol"/>
    <property type="evidence" value="ECO:0007669"/>
    <property type="project" value="TreeGrafter"/>
</dbReference>
<dbReference type="GO" id="GO:0005524">
    <property type="term" value="F:ATP binding"/>
    <property type="evidence" value="ECO:0007669"/>
    <property type="project" value="UniProtKB-KW"/>
</dbReference>
<dbReference type="GO" id="GO:0003883">
    <property type="term" value="F:CTP synthase activity"/>
    <property type="evidence" value="ECO:0007669"/>
    <property type="project" value="UniProtKB-UniRule"/>
</dbReference>
<dbReference type="GO" id="GO:0004359">
    <property type="term" value="F:glutaminase activity"/>
    <property type="evidence" value="ECO:0007669"/>
    <property type="project" value="RHEA"/>
</dbReference>
<dbReference type="GO" id="GO:0042802">
    <property type="term" value="F:identical protein binding"/>
    <property type="evidence" value="ECO:0007669"/>
    <property type="project" value="TreeGrafter"/>
</dbReference>
<dbReference type="GO" id="GO:0046872">
    <property type="term" value="F:metal ion binding"/>
    <property type="evidence" value="ECO:0007669"/>
    <property type="project" value="UniProtKB-KW"/>
</dbReference>
<dbReference type="GO" id="GO:0044210">
    <property type="term" value="P:'de novo' CTP biosynthetic process"/>
    <property type="evidence" value="ECO:0007669"/>
    <property type="project" value="UniProtKB-UniRule"/>
</dbReference>
<dbReference type="GO" id="GO:0019856">
    <property type="term" value="P:pyrimidine nucleobase biosynthetic process"/>
    <property type="evidence" value="ECO:0007669"/>
    <property type="project" value="TreeGrafter"/>
</dbReference>
<dbReference type="CDD" id="cd03113">
    <property type="entry name" value="CTPS_N"/>
    <property type="match status" value="1"/>
</dbReference>
<dbReference type="CDD" id="cd01746">
    <property type="entry name" value="GATase1_CTP_Synthase"/>
    <property type="match status" value="1"/>
</dbReference>
<dbReference type="FunFam" id="3.40.50.300:FF:000009">
    <property type="entry name" value="CTP synthase"/>
    <property type="match status" value="1"/>
</dbReference>
<dbReference type="FunFam" id="3.40.50.880:FF:000002">
    <property type="entry name" value="CTP synthase"/>
    <property type="match status" value="1"/>
</dbReference>
<dbReference type="Gene3D" id="3.40.50.880">
    <property type="match status" value="1"/>
</dbReference>
<dbReference type="Gene3D" id="3.40.50.300">
    <property type="entry name" value="P-loop containing nucleotide triphosphate hydrolases"/>
    <property type="match status" value="1"/>
</dbReference>
<dbReference type="HAMAP" id="MF_01227">
    <property type="entry name" value="PyrG"/>
    <property type="match status" value="1"/>
</dbReference>
<dbReference type="InterPro" id="IPR029062">
    <property type="entry name" value="Class_I_gatase-like"/>
</dbReference>
<dbReference type="InterPro" id="IPR004468">
    <property type="entry name" value="CTP_synthase"/>
</dbReference>
<dbReference type="InterPro" id="IPR017456">
    <property type="entry name" value="CTP_synthase_N"/>
</dbReference>
<dbReference type="InterPro" id="IPR017926">
    <property type="entry name" value="GATASE"/>
</dbReference>
<dbReference type="InterPro" id="IPR033828">
    <property type="entry name" value="GATase1_CTP_Synthase"/>
</dbReference>
<dbReference type="InterPro" id="IPR027417">
    <property type="entry name" value="P-loop_NTPase"/>
</dbReference>
<dbReference type="NCBIfam" id="NF003792">
    <property type="entry name" value="PRK05380.1"/>
    <property type="match status" value="1"/>
</dbReference>
<dbReference type="NCBIfam" id="TIGR00337">
    <property type="entry name" value="PyrG"/>
    <property type="match status" value="1"/>
</dbReference>
<dbReference type="PANTHER" id="PTHR11550">
    <property type="entry name" value="CTP SYNTHASE"/>
    <property type="match status" value="1"/>
</dbReference>
<dbReference type="PANTHER" id="PTHR11550:SF0">
    <property type="entry name" value="CTP SYNTHASE-RELATED"/>
    <property type="match status" value="1"/>
</dbReference>
<dbReference type="Pfam" id="PF06418">
    <property type="entry name" value="CTP_synth_N"/>
    <property type="match status" value="1"/>
</dbReference>
<dbReference type="Pfam" id="PF00117">
    <property type="entry name" value="GATase"/>
    <property type="match status" value="1"/>
</dbReference>
<dbReference type="SUPFAM" id="SSF52317">
    <property type="entry name" value="Class I glutamine amidotransferase-like"/>
    <property type="match status" value="1"/>
</dbReference>
<dbReference type="SUPFAM" id="SSF52540">
    <property type="entry name" value="P-loop containing nucleoside triphosphate hydrolases"/>
    <property type="match status" value="1"/>
</dbReference>
<dbReference type="PROSITE" id="PS51273">
    <property type="entry name" value="GATASE_TYPE_1"/>
    <property type="match status" value="1"/>
</dbReference>
<evidence type="ECO:0000255" key="1">
    <source>
        <dbReference type="HAMAP-Rule" id="MF_01227"/>
    </source>
</evidence>
<feature type="chain" id="PRO_0000266199" description="CTP synthase">
    <location>
        <begin position="1"/>
        <end position="543"/>
    </location>
</feature>
<feature type="domain" description="Glutamine amidotransferase type-1" evidence="1">
    <location>
        <begin position="291"/>
        <end position="542"/>
    </location>
</feature>
<feature type="region of interest" description="Amidoligase domain" evidence="1">
    <location>
        <begin position="1"/>
        <end position="265"/>
    </location>
</feature>
<feature type="active site" description="Nucleophile; for glutamine hydrolysis" evidence="1">
    <location>
        <position position="380"/>
    </location>
</feature>
<feature type="active site" evidence="1">
    <location>
        <position position="515"/>
    </location>
</feature>
<feature type="active site" evidence="1">
    <location>
        <position position="517"/>
    </location>
</feature>
<feature type="binding site" evidence="1">
    <location>
        <position position="13"/>
    </location>
    <ligand>
        <name>CTP</name>
        <dbReference type="ChEBI" id="CHEBI:37563"/>
        <note>allosteric inhibitor</note>
    </ligand>
</feature>
<feature type="binding site" evidence="1">
    <location>
        <position position="13"/>
    </location>
    <ligand>
        <name>UTP</name>
        <dbReference type="ChEBI" id="CHEBI:46398"/>
    </ligand>
</feature>
<feature type="binding site" evidence="1">
    <location>
        <begin position="14"/>
        <end position="19"/>
    </location>
    <ligand>
        <name>ATP</name>
        <dbReference type="ChEBI" id="CHEBI:30616"/>
    </ligand>
</feature>
<feature type="binding site" evidence="1">
    <location>
        <position position="54"/>
    </location>
    <ligand>
        <name>L-glutamine</name>
        <dbReference type="ChEBI" id="CHEBI:58359"/>
    </ligand>
</feature>
<feature type="binding site" evidence="1">
    <location>
        <position position="71"/>
    </location>
    <ligand>
        <name>ATP</name>
        <dbReference type="ChEBI" id="CHEBI:30616"/>
    </ligand>
</feature>
<feature type="binding site" evidence="1">
    <location>
        <position position="71"/>
    </location>
    <ligand>
        <name>Mg(2+)</name>
        <dbReference type="ChEBI" id="CHEBI:18420"/>
    </ligand>
</feature>
<feature type="binding site" evidence="1">
    <location>
        <position position="139"/>
    </location>
    <ligand>
        <name>Mg(2+)</name>
        <dbReference type="ChEBI" id="CHEBI:18420"/>
    </ligand>
</feature>
<feature type="binding site" evidence="1">
    <location>
        <begin position="146"/>
        <end position="148"/>
    </location>
    <ligand>
        <name>CTP</name>
        <dbReference type="ChEBI" id="CHEBI:37563"/>
        <note>allosteric inhibitor</note>
    </ligand>
</feature>
<feature type="binding site" evidence="1">
    <location>
        <begin position="186"/>
        <end position="191"/>
    </location>
    <ligand>
        <name>CTP</name>
        <dbReference type="ChEBI" id="CHEBI:37563"/>
        <note>allosteric inhibitor</note>
    </ligand>
</feature>
<feature type="binding site" evidence="1">
    <location>
        <begin position="186"/>
        <end position="191"/>
    </location>
    <ligand>
        <name>UTP</name>
        <dbReference type="ChEBI" id="CHEBI:46398"/>
    </ligand>
</feature>
<feature type="binding site" evidence="1">
    <location>
        <position position="222"/>
    </location>
    <ligand>
        <name>CTP</name>
        <dbReference type="ChEBI" id="CHEBI:37563"/>
        <note>allosteric inhibitor</note>
    </ligand>
</feature>
<feature type="binding site" evidence="1">
    <location>
        <position position="222"/>
    </location>
    <ligand>
        <name>UTP</name>
        <dbReference type="ChEBI" id="CHEBI:46398"/>
    </ligand>
</feature>
<feature type="binding site" evidence="1">
    <location>
        <begin position="238"/>
        <end position="240"/>
    </location>
    <ligand>
        <name>ATP</name>
        <dbReference type="ChEBI" id="CHEBI:30616"/>
    </ligand>
</feature>
<feature type="binding site" evidence="1">
    <location>
        <position position="353"/>
    </location>
    <ligand>
        <name>L-glutamine</name>
        <dbReference type="ChEBI" id="CHEBI:58359"/>
    </ligand>
</feature>
<feature type="binding site" evidence="1">
    <location>
        <begin position="381"/>
        <end position="384"/>
    </location>
    <ligand>
        <name>L-glutamine</name>
        <dbReference type="ChEBI" id="CHEBI:58359"/>
    </ligand>
</feature>
<feature type="binding site" evidence="1">
    <location>
        <position position="404"/>
    </location>
    <ligand>
        <name>L-glutamine</name>
        <dbReference type="ChEBI" id="CHEBI:58359"/>
    </ligand>
</feature>
<feature type="binding site" evidence="1">
    <location>
        <position position="470"/>
    </location>
    <ligand>
        <name>L-glutamine</name>
        <dbReference type="ChEBI" id="CHEBI:58359"/>
    </ligand>
</feature>
<comment type="function">
    <text evidence="1">Catalyzes the ATP-dependent amination of UTP to CTP with either L-glutamine or ammonia as the source of nitrogen. Regulates intracellular CTP levels through interactions with the four ribonucleotide triphosphates.</text>
</comment>
<comment type="catalytic activity">
    <reaction evidence="1">
        <text>UTP + L-glutamine + ATP + H2O = CTP + L-glutamate + ADP + phosphate + 2 H(+)</text>
        <dbReference type="Rhea" id="RHEA:26426"/>
        <dbReference type="ChEBI" id="CHEBI:15377"/>
        <dbReference type="ChEBI" id="CHEBI:15378"/>
        <dbReference type="ChEBI" id="CHEBI:29985"/>
        <dbReference type="ChEBI" id="CHEBI:30616"/>
        <dbReference type="ChEBI" id="CHEBI:37563"/>
        <dbReference type="ChEBI" id="CHEBI:43474"/>
        <dbReference type="ChEBI" id="CHEBI:46398"/>
        <dbReference type="ChEBI" id="CHEBI:58359"/>
        <dbReference type="ChEBI" id="CHEBI:456216"/>
        <dbReference type="EC" id="6.3.4.2"/>
    </reaction>
</comment>
<comment type="catalytic activity">
    <reaction evidence="1">
        <text>L-glutamine + H2O = L-glutamate + NH4(+)</text>
        <dbReference type="Rhea" id="RHEA:15889"/>
        <dbReference type="ChEBI" id="CHEBI:15377"/>
        <dbReference type="ChEBI" id="CHEBI:28938"/>
        <dbReference type="ChEBI" id="CHEBI:29985"/>
        <dbReference type="ChEBI" id="CHEBI:58359"/>
    </reaction>
</comment>
<comment type="catalytic activity">
    <reaction evidence="1">
        <text>UTP + NH4(+) + ATP = CTP + ADP + phosphate + 2 H(+)</text>
        <dbReference type="Rhea" id="RHEA:16597"/>
        <dbReference type="ChEBI" id="CHEBI:15378"/>
        <dbReference type="ChEBI" id="CHEBI:28938"/>
        <dbReference type="ChEBI" id="CHEBI:30616"/>
        <dbReference type="ChEBI" id="CHEBI:37563"/>
        <dbReference type="ChEBI" id="CHEBI:43474"/>
        <dbReference type="ChEBI" id="CHEBI:46398"/>
        <dbReference type="ChEBI" id="CHEBI:456216"/>
    </reaction>
</comment>
<comment type="activity regulation">
    <text evidence="1">Allosterically activated by GTP, when glutamine is the substrate; GTP has no effect on the reaction when ammonia is the substrate. The allosteric effector GTP functions by stabilizing the protein conformation that binds the tetrahedral intermediate(s) formed during glutamine hydrolysis. Inhibited by the product CTP, via allosteric rather than competitive inhibition.</text>
</comment>
<comment type="pathway">
    <text evidence="1">Pyrimidine metabolism; CTP biosynthesis via de novo pathway; CTP from UDP: step 2/2.</text>
</comment>
<comment type="subunit">
    <text evidence="1">Homotetramer.</text>
</comment>
<comment type="miscellaneous">
    <text evidence="1">CTPSs have evolved a hybrid strategy for distinguishing between UTP and CTP. The overlapping regions of the product feedback inhibitory and substrate sites recognize a common feature in both compounds, the triphosphate moiety. To differentiate isosteric substrate and product pyrimidine rings, an additional pocket far from the expected kinase/ligase catalytic site, specifically recognizes the cytosine and ribose portions of the product inhibitor.</text>
</comment>
<comment type="similarity">
    <text evidence="1">Belongs to the CTP synthase family.</text>
</comment>
<name>PYRG_RHOPB</name>